<keyword id="KW-0030">Aminoacyl-tRNA synthetase</keyword>
<keyword id="KW-0067">ATP-binding</keyword>
<keyword id="KW-0963">Cytoplasm</keyword>
<keyword id="KW-0436">Ligase</keyword>
<keyword id="KW-0479">Metal-binding</keyword>
<keyword id="KW-0547">Nucleotide-binding</keyword>
<keyword id="KW-0648">Protein biosynthesis</keyword>
<keyword id="KW-1185">Reference proteome</keyword>
<keyword id="KW-0694">RNA-binding</keyword>
<keyword id="KW-0820">tRNA-binding</keyword>
<keyword id="KW-0862">Zinc</keyword>
<sequence length="865" mass="96051">MITTKELRNKFINYFESKNHSHQPSSSLIPFGDDTLLFTNAGMVQFKDVFLGIEKKDFSRAVTVQKCLRAGGKHNDLDNVGYTARHHTFFEMLGNFSFGDYFKKEAISFAWEFLTKEIKLPVEKLWVTIYASDDEAFDVWHKHIGLAKERIIRIDSSDNFWSMGDTGPCGPCTEIFYDHGEDVAGGLPGTPEQDGDRYIEIWNIVFMQYNRHADGSTTDLPKPSVDTGMGLERISAVLQNVHSNYEIDLFQALIKKAQQVTHAKDINSPSLKVIADHIRACAFLIADGVLPANEGRGYVLRRIIRRAIRHGNKVGAKEIFFYKLVAELVSQMGEAYSQLIDKRELIEKTLIKEEELFLKTIENGIKIFDAEIENLKDNTISGEVAFKLYDTYGFPFDLTADMAREKGLKVDEQAFLAQMQIQKQRSKEAGKFNVDYNSLINSQVKSEFRGYSTLIEDAKVLEIYQDGQLVASTSEQVSAVVVLDKTPFYAESGGQVGDKGILEGVGFEFVVEDVQKSGEAILHIGKLVKGRLNLNDELTARVSDKPRLATAANHSATHLLYKALKLVLGGHAEQKGSLVDENRLRFDFTHDKAISRSEIEQIELLVNQQIRANYPVTTIETSQQKAKSLGAEALFGEKYGDIVRVISMGDFSIELCGGTHVAYTGDIGLFKVTSEGSIASGVRRIEAVTADKAIRHTFTNENKIIAIKDSLKANDTNLIDKIKSMLEQIKNQEKQIAKLKKELLSGSSNDIKETSIGDIKIVVANVDGVDVKTLRNKIDDYKSKNTKVIAVLTTTNADKVQFVIGVSNALTTLIKAGDIAKELSSHIDGKGGGRADMAQGGGNNSANIDQALSQVEKFILNNIKE</sequence>
<reference key="1">
    <citation type="submission" date="2006-03" db="EMBL/GenBank/DDBJ databases">
        <title>Complete genome sequence of Francisella tularensis LVS (Live Vaccine Strain).</title>
        <authorList>
            <person name="Chain P."/>
            <person name="Larimer F."/>
            <person name="Land M."/>
            <person name="Stilwagen S."/>
            <person name="Larsson P."/>
            <person name="Bearden S."/>
            <person name="Chu M."/>
            <person name="Oyston P."/>
            <person name="Forsman M."/>
            <person name="Andersson S."/>
            <person name="Lindler L."/>
            <person name="Titball R."/>
            <person name="Garcia E."/>
        </authorList>
    </citation>
    <scope>NUCLEOTIDE SEQUENCE [LARGE SCALE GENOMIC DNA]</scope>
    <source>
        <strain>LVS</strain>
    </source>
</reference>
<dbReference type="EC" id="6.1.1.7" evidence="1"/>
<dbReference type="EMBL" id="AM233362">
    <property type="protein sequence ID" value="CAJ79545.1"/>
    <property type="molecule type" value="Genomic_DNA"/>
</dbReference>
<dbReference type="RefSeq" id="WP_003016055.1">
    <property type="nucleotide sequence ID" value="NZ_CP009694.1"/>
</dbReference>
<dbReference type="SMR" id="Q2A3A9"/>
<dbReference type="KEGG" id="ftl:FTL_1106"/>
<dbReference type="Proteomes" id="UP000001944">
    <property type="component" value="Chromosome"/>
</dbReference>
<dbReference type="GO" id="GO:0005829">
    <property type="term" value="C:cytosol"/>
    <property type="evidence" value="ECO:0007669"/>
    <property type="project" value="TreeGrafter"/>
</dbReference>
<dbReference type="GO" id="GO:0004813">
    <property type="term" value="F:alanine-tRNA ligase activity"/>
    <property type="evidence" value="ECO:0007669"/>
    <property type="project" value="UniProtKB-UniRule"/>
</dbReference>
<dbReference type="GO" id="GO:0002161">
    <property type="term" value="F:aminoacyl-tRNA deacylase activity"/>
    <property type="evidence" value="ECO:0007669"/>
    <property type="project" value="TreeGrafter"/>
</dbReference>
<dbReference type="GO" id="GO:0005524">
    <property type="term" value="F:ATP binding"/>
    <property type="evidence" value="ECO:0007669"/>
    <property type="project" value="UniProtKB-UniRule"/>
</dbReference>
<dbReference type="GO" id="GO:0000049">
    <property type="term" value="F:tRNA binding"/>
    <property type="evidence" value="ECO:0007669"/>
    <property type="project" value="UniProtKB-KW"/>
</dbReference>
<dbReference type="GO" id="GO:0008270">
    <property type="term" value="F:zinc ion binding"/>
    <property type="evidence" value="ECO:0007669"/>
    <property type="project" value="UniProtKB-UniRule"/>
</dbReference>
<dbReference type="GO" id="GO:0006419">
    <property type="term" value="P:alanyl-tRNA aminoacylation"/>
    <property type="evidence" value="ECO:0007669"/>
    <property type="project" value="UniProtKB-UniRule"/>
</dbReference>
<dbReference type="GO" id="GO:0045892">
    <property type="term" value="P:negative regulation of DNA-templated transcription"/>
    <property type="evidence" value="ECO:0007669"/>
    <property type="project" value="TreeGrafter"/>
</dbReference>
<dbReference type="CDD" id="cd00673">
    <property type="entry name" value="AlaRS_core"/>
    <property type="match status" value="1"/>
</dbReference>
<dbReference type="FunFam" id="2.40.30.130:FF:000001">
    <property type="entry name" value="Alanine--tRNA ligase"/>
    <property type="match status" value="1"/>
</dbReference>
<dbReference type="FunFam" id="3.10.310.40:FF:000001">
    <property type="entry name" value="Alanine--tRNA ligase"/>
    <property type="match status" value="1"/>
</dbReference>
<dbReference type="FunFam" id="3.30.54.20:FF:000001">
    <property type="entry name" value="Alanine--tRNA ligase"/>
    <property type="match status" value="1"/>
</dbReference>
<dbReference type="FunFam" id="3.30.930.10:FF:000004">
    <property type="entry name" value="Alanine--tRNA ligase"/>
    <property type="match status" value="1"/>
</dbReference>
<dbReference type="FunFam" id="3.30.980.10:FF:000004">
    <property type="entry name" value="Alanine--tRNA ligase, cytoplasmic"/>
    <property type="match status" value="1"/>
</dbReference>
<dbReference type="Gene3D" id="2.40.30.130">
    <property type="match status" value="1"/>
</dbReference>
<dbReference type="Gene3D" id="3.10.310.40">
    <property type="match status" value="1"/>
</dbReference>
<dbReference type="Gene3D" id="3.30.54.20">
    <property type="match status" value="1"/>
</dbReference>
<dbReference type="Gene3D" id="6.10.250.550">
    <property type="match status" value="1"/>
</dbReference>
<dbReference type="Gene3D" id="3.30.930.10">
    <property type="entry name" value="Bira Bifunctional Protein, Domain 2"/>
    <property type="match status" value="1"/>
</dbReference>
<dbReference type="Gene3D" id="3.30.980.10">
    <property type="entry name" value="Threonyl-trna Synthetase, Chain A, domain 2"/>
    <property type="match status" value="1"/>
</dbReference>
<dbReference type="HAMAP" id="MF_00036_B">
    <property type="entry name" value="Ala_tRNA_synth_B"/>
    <property type="match status" value="1"/>
</dbReference>
<dbReference type="InterPro" id="IPR045864">
    <property type="entry name" value="aa-tRNA-synth_II/BPL/LPL"/>
</dbReference>
<dbReference type="InterPro" id="IPR002318">
    <property type="entry name" value="Ala-tRNA-lgiase_IIc"/>
</dbReference>
<dbReference type="InterPro" id="IPR018162">
    <property type="entry name" value="Ala-tRNA-ligase_IIc_anticod-bd"/>
</dbReference>
<dbReference type="InterPro" id="IPR018165">
    <property type="entry name" value="Ala-tRNA-synth_IIc_core"/>
</dbReference>
<dbReference type="InterPro" id="IPR018164">
    <property type="entry name" value="Ala-tRNA-synth_IIc_N"/>
</dbReference>
<dbReference type="InterPro" id="IPR050058">
    <property type="entry name" value="Ala-tRNA_ligase"/>
</dbReference>
<dbReference type="InterPro" id="IPR023033">
    <property type="entry name" value="Ala_tRNA_ligase_euk/bac"/>
</dbReference>
<dbReference type="InterPro" id="IPR003156">
    <property type="entry name" value="DHHA1_dom"/>
</dbReference>
<dbReference type="InterPro" id="IPR018163">
    <property type="entry name" value="Thr/Ala-tRNA-synth_IIc_edit"/>
</dbReference>
<dbReference type="InterPro" id="IPR009000">
    <property type="entry name" value="Transl_B-barrel_sf"/>
</dbReference>
<dbReference type="InterPro" id="IPR012947">
    <property type="entry name" value="tRNA_SAD"/>
</dbReference>
<dbReference type="NCBIfam" id="TIGR00344">
    <property type="entry name" value="alaS"/>
    <property type="match status" value="1"/>
</dbReference>
<dbReference type="PANTHER" id="PTHR11777:SF9">
    <property type="entry name" value="ALANINE--TRNA LIGASE, CYTOPLASMIC"/>
    <property type="match status" value="1"/>
</dbReference>
<dbReference type="PANTHER" id="PTHR11777">
    <property type="entry name" value="ALANYL-TRNA SYNTHETASE"/>
    <property type="match status" value="1"/>
</dbReference>
<dbReference type="Pfam" id="PF02272">
    <property type="entry name" value="DHHA1"/>
    <property type="match status" value="1"/>
</dbReference>
<dbReference type="Pfam" id="PF01411">
    <property type="entry name" value="tRNA-synt_2c"/>
    <property type="match status" value="1"/>
</dbReference>
<dbReference type="Pfam" id="PF07973">
    <property type="entry name" value="tRNA_SAD"/>
    <property type="match status" value="1"/>
</dbReference>
<dbReference type="PRINTS" id="PR00980">
    <property type="entry name" value="TRNASYNTHALA"/>
</dbReference>
<dbReference type="SMART" id="SM00863">
    <property type="entry name" value="tRNA_SAD"/>
    <property type="match status" value="1"/>
</dbReference>
<dbReference type="SUPFAM" id="SSF55681">
    <property type="entry name" value="Class II aaRS and biotin synthetases"/>
    <property type="match status" value="1"/>
</dbReference>
<dbReference type="SUPFAM" id="SSF101353">
    <property type="entry name" value="Putative anticodon-binding domain of alanyl-tRNA synthetase (AlaRS)"/>
    <property type="match status" value="1"/>
</dbReference>
<dbReference type="SUPFAM" id="SSF55186">
    <property type="entry name" value="ThrRS/AlaRS common domain"/>
    <property type="match status" value="1"/>
</dbReference>
<dbReference type="SUPFAM" id="SSF50447">
    <property type="entry name" value="Translation proteins"/>
    <property type="match status" value="1"/>
</dbReference>
<dbReference type="PROSITE" id="PS50860">
    <property type="entry name" value="AA_TRNA_LIGASE_II_ALA"/>
    <property type="match status" value="1"/>
</dbReference>
<gene>
    <name evidence="1" type="primary">alaS</name>
    <name type="ordered locus">FTL_1106</name>
</gene>
<name>SYA_FRATH</name>
<protein>
    <recommendedName>
        <fullName evidence="1">Alanine--tRNA ligase</fullName>
        <ecNumber evidence="1">6.1.1.7</ecNumber>
    </recommendedName>
    <alternativeName>
        <fullName evidence="1">Alanyl-tRNA synthetase</fullName>
        <shortName evidence="1">AlaRS</shortName>
    </alternativeName>
</protein>
<proteinExistence type="inferred from homology"/>
<feature type="chain" id="PRO_0000347611" description="Alanine--tRNA ligase">
    <location>
        <begin position="1"/>
        <end position="865"/>
    </location>
</feature>
<feature type="binding site" evidence="1">
    <location>
        <position position="554"/>
    </location>
    <ligand>
        <name>Zn(2+)</name>
        <dbReference type="ChEBI" id="CHEBI:29105"/>
    </ligand>
</feature>
<feature type="binding site" evidence="1">
    <location>
        <position position="558"/>
    </location>
    <ligand>
        <name>Zn(2+)</name>
        <dbReference type="ChEBI" id="CHEBI:29105"/>
    </ligand>
</feature>
<feature type="binding site" evidence="1">
    <location>
        <position position="656"/>
    </location>
    <ligand>
        <name>Zn(2+)</name>
        <dbReference type="ChEBI" id="CHEBI:29105"/>
    </ligand>
</feature>
<feature type="binding site" evidence="1">
    <location>
        <position position="660"/>
    </location>
    <ligand>
        <name>Zn(2+)</name>
        <dbReference type="ChEBI" id="CHEBI:29105"/>
    </ligand>
</feature>
<accession>Q2A3A9</accession>
<comment type="function">
    <text evidence="1">Catalyzes the attachment of alanine to tRNA(Ala) in a two-step reaction: alanine is first activated by ATP to form Ala-AMP and then transferred to the acceptor end of tRNA(Ala). Also edits incorrectly charged Ser-tRNA(Ala) and Gly-tRNA(Ala) via its editing domain.</text>
</comment>
<comment type="catalytic activity">
    <reaction evidence="1">
        <text>tRNA(Ala) + L-alanine + ATP = L-alanyl-tRNA(Ala) + AMP + diphosphate</text>
        <dbReference type="Rhea" id="RHEA:12540"/>
        <dbReference type="Rhea" id="RHEA-COMP:9657"/>
        <dbReference type="Rhea" id="RHEA-COMP:9923"/>
        <dbReference type="ChEBI" id="CHEBI:30616"/>
        <dbReference type="ChEBI" id="CHEBI:33019"/>
        <dbReference type="ChEBI" id="CHEBI:57972"/>
        <dbReference type="ChEBI" id="CHEBI:78442"/>
        <dbReference type="ChEBI" id="CHEBI:78497"/>
        <dbReference type="ChEBI" id="CHEBI:456215"/>
        <dbReference type="EC" id="6.1.1.7"/>
    </reaction>
</comment>
<comment type="cofactor">
    <cofactor evidence="1">
        <name>Zn(2+)</name>
        <dbReference type="ChEBI" id="CHEBI:29105"/>
    </cofactor>
    <text evidence="1">Binds 1 zinc ion per subunit.</text>
</comment>
<comment type="subcellular location">
    <subcellularLocation>
        <location evidence="1">Cytoplasm</location>
    </subcellularLocation>
</comment>
<comment type="domain">
    <text evidence="1">Consists of three domains; the N-terminal catalytic domain, the editing domain and the C-terminal C-Ala domain. The editing domain removes incorrectly charged amino acids, while the C-Ala domain, along with tRNA(Ala), serves as a bridge to cooperatively bring together the editing and aminoacylation centers thus stimulating deacylation of misacylated tRNAs.</text>
</comment>
<comment type="similarity">
    <text evidence="1">Belongs to the class-II aminoacyl-tRNA synthetase family.</text>
</comment>
<evidence type="ECO:0000255" key="1">
    <source>
        <dbReference type="HAMAP-Rule" id="MF_00036"/>
    </source>
</evidence>
<organism>
    <name type="scientific">Francisella tularensis subsp. holarctica (strain LVS)</name>
    <dbReference type="NCBI Taxonomy" id="376619"/>
    <lineage>
        <taxon>Bacteria</taxon>
        <taxon>Pseudomonadati</taxon>
        <taxon>Pseudomonadota</taxon>
        <taxon>Gammaproteobacteria</taxon>
        <taxon>Thiotrichales</taxon>
        <taxon>Francisellaceae</taxon>
        <taxon>Francisella</taxon>
    </lineage>
</organism>